<reference key="1">
    <citation type="submission" date="2007-10" db="EMBL/GenBank/DDBJ databases">
        <title>Complete sequence of chromosome 1 of Burkholderia multivorans ATCC 17616.</title>
        <authorList>
            <person name="Copeland A."/>
            <person name="Lucas S."/>
            <person name="Lapidus A."/>
            <person name="Barry K."/>
            <person name="Glavina del Rio T."/>
            <person name="Dalin E."/>
            <person name="Tice H."/>
            <person name="Pitluck S."/>
            <person name="Chain P."/>
            <person name="Malfatti S."/>
            <person name="Shin M."/>
            <person name="Vergez L."/>
            <person name="Schmutz J."/>
            <person name="Larimer F."/>
            <person name="Land M."/>
            <person name="Hauser L."/>
            <person name="Kyrpides N."/>
            <person name="Kim E."/>
            <person name="Tiedje J."/>
            <person name="Richardson P."/>
        </authorList>
    </citation>
    <scope>NUCLEOTIDE SEQUENCE [LARGE SCALE GENOMIC DNA]</scope>
    <source>
        <strain>ATCC 17616 / 249</strain>
    </source>
</reference>
<reference key="2">
    <citation type="submission" date="2007-04" db="EMBL/GenBank/DDBJ databases">
        <title>Complete genome sequence of Burkholderia multivorans ATCC 17616.</title>
        <authorList>
            <person name="Ohtsubo Y."/>
            <person name="Yamashita A."/>
            <person name="Kurokawa K."/>
            <person name="Takami H."/>
            <person name="Yuhara S."/>
            <person name="Nishiyama E."/>
            <person name="Endo R."/>
            <person name="Miyazaki R."/>
            <person name="Ono A."/>
            <person name="Yano K."/>
            <person name="Ito M."/>
            <person name="Sota M."/>
            <person name="Yuji N."/>
            <person name="Hattori M."/>
            <person name="Tsuda M."/>
        </authorList>
    </citation>
    <scope>NUCLEOTIDE SEQUENCE [LARGE SCALE GENOMIC DNA]</scope>
    <source>
        <strain>ATCC 17616 / 249</strain>
    </source>
</reference>
<keyword id="KW-0067">ATP-binding</keyword>
<keyword id="KW-0963">Cytoplasm</keyword>
<keyword id="KW-0235">DNA replication</keyword>
<keyword id="KW-0238">DNA-binding</keyword>
<keyword id="KW-0446">Lipid-binding</keyword>
<keyword id="KW-0547">Nucleotide-binding</keyword>
<keyword id="KW-1185">Reference proteome</keyword>
<organism>
    <name type="scientific">Burkholderia multivorans (strain ATCC 17616 / 249)</name>
    <dbReference type="NCBI Taxonomy" id="395019"/>
    <lineage>
        <taxon>Bacteria</taxon>
        <taxon>Pseudomonadati</taxon>
        <taxon>Pseudomonadota</taxon>
        <taxon>Betaproteobacteria</taxon>
        <taxon>Burkholderiales</taxon>
        <taxon>Burkholderiaceae</taxon>
        <taxon>Burkholderia</taxon>
        <taxon>Burkholderia cepacia complex</taxon>
    </lineage>
</organism>
<sequence>MNDFWQHCSALLERELTPQQYVTWIKPLAPVAFDASANTLSIAAPNRFKLDWVKSQFSGRIADLARDFWNAPIEVQFVLDPKAGMRSPAAGAAPAAPRAPLASGPAATVAAIAANLTANQSATPAAPADVPMTPSAAAAHHLNNDDADIDLPSLPAHEAAAGRRTWRPGPGAAPAAGGEADSMYERSKLNPVLTFDNFVTGKANQLARAAAIQVADNPGISYNPLFLYGGVGLGKTHLIHAIGNQLLLDKPGARIRYIHAEQYVSDVVKAYQRKAFDDFKRYYHSLDLLLIDDIQFFSGKSRTQEEFFYAFEALVANKAQVIITSDTYPKEISGIDDRLISRFDSGLTVAIEPPELEMRVAILMRKAQSEGVNLSEDVAFFVAKHLRSNVRELEGALRKILAYSKFHGREISIELTKEALKDLLTVQNRQISVENIQKTVADFYNIKVADMYSKKRPANIARPRQIAMYLAKELTQKSLPEIGELFGGRDHTTVLHAVRKIADERSKDAQLNHELHVLEQTLKG</sequence>
<protein>
    <recommendedName>
        <fullName evidence="1">Chromosomal replication initiator protein DnaA</fullName>
    </recommendedName>
</protein>
<name>DNAA_BURM1</name>
<evidence type="ECO:0000255" key="1">
    <source>
        <dbReference type="HAMAP-Rule" id="MF_00377"/>
    </source>
</evidence>
<comment type="function">
    <text evidence="1">Plays an essential role in the initiation and regulation of chromosomal replication. ATP-DnaA binds to the origin of replication (oriC) to initiate formation of the DNA replication initiation complex once per cell cycle. Binds the DnaA box (a 9 base pair repeat at the origin) and separates the double-stranded (ds)DNA. Forms a right-handed helical filament on oriC DNA; dsDNA binds to the exterior of the filament while single-stranded (ss)DNA is stabiized in the filament's interior. The ATP-DnaA-oriC complex binds and stabilizes one strand of the AT-rich DNA unwinding element (DUE), permitting loading of DNA polymerase. After initiation quickly degrades to an ADP-DnaA complex that is not apt for DNA replication. Binds acidic phospholipids.</text>
</comment>
<comment type="subunit">
    <text evidence="1">Oligomerizes as a right-handed, spiral filament on DNA at oriC.</text>
</comment>
<comment type="subcellular location">
    <subcellularLocation>
        <location evidence="1">Cytoplasm</location>
    </subcellularLocation>
</comment>
<comment type="domain">
    <text evidence="1">Domain I is involved in oligomerization and binding regulators, domain II is flexibile and of varying length in different bacteria, domain III forms the AAA+ region, while domain IV binds dsDNA.</text>
</comment>
<comment type="similarity">
    <text evidence="1">Belongs to the DnaA family.</text>
</comment>
<proteinExistence type="inferred from homology"/>
<dbReference type="EMBL" id="CP000868">
    <property type="protein sequence ID" value="ABX13696.1"/>
    <property type="molecule type" value="Genomic_DNA"/>
</dbReference>
<dbReference type="EMBL" id="AP009385">
    <property type="protein sequence ID" value="BAG42050.1"/>
    <property type="molecule type" value="Genomic_DNA"/>
</dbReference>
<dbReference type="RefSeq" id="WP_006401751.1">
    <property type="nucleotide sequence ID" value="NC_010804.1"/>
</dbReference>
<dbReference type="SMR" id="A9AI97"/>
<dbReference type="STRING" id="395019.BMULJ_00070"/>
<dbReference type="KEGG" id="bmj:BMULJ_00070"/>
<dbReference type="KEGG" id="bmu:Bmul_0001"/>
<dbReference type="eggNOG" id="COG0593">
    <property type="taxonomic scope" value="Bacteria"/>
</dbReference>
<dbReference type="HOGENOM" id="CLU_026910_0_1_4"/>
<dbReference type="Proteomes" id="UP000008815">
    <property type="component" value="Chromosome 1"/>
</dbReference>
<dbReference type="GO" id="GO:0005737">
    <property type="term" value="C:cytoplasm"/>
    <property type="evidence" value="ECO:0007669"/>
    <property type="project" value="UniProtKB-SubCell"/>
</dbReference>
<dbReference type="GO" id="GO:0005886">
    <property type="term" value="C:plasma membrane"/>
    <property type="evidence" value="ECO:0007669"/>
    <property type="project" value="TreeGrafter"/>
</dbReference>
<dbReference type="GO" id="GO:0005524">
    <property type="term" value="F:ATP binding"/>
    <property type="evidence" value="ECO:0007669"/>
    <property type="project" value="UniProtKB-UniRule"/>
</dbReference>
<dbReference type="GO" id="GO:0016887">
    <property type="term" value="F:ATP hydrolysis activity"/>
    <property type="evidence" value="ECO:0007669"/>
    <property type="project" value="InterPro"/>
</dbReference>
<dbReference type="GO" id="GO:0003688">
    <property type="term" value="F:DNA replication origin binding"/>
    <property type="evidence" value="ECO:0007669"/>
    <property type="project" value="UniProtKB-UniRule"/>
</dbReference>
<dbReference type="GO" id="GO:0008289">
    <property type="term" value="F:lipid binding"/>
    <property type="evidence" value="ECO:0007669"/>
    <property type="project" value="UniProtKB-KW"/>
</dbReference>
<dbReference type="GO" id="GO:0006270">
    <property type="term" value="P:DNA replication initiation"/>
    <property type="evidence" value="ECO:0007669"/>
    <property type="project" value="UniProtKB-UniRule"/>
</dbReference>
<dbReference type="GO" id="GO:0006275">
    <property type="term" value="P:regulation of DNA replication"/>
    <property type="evidence" value="ECO:0007669"/>
    <property type="project" value="UniProtKB-UniRule"/>
</dbReference>
<dbReference type="CDD" id="cd00009">
    <property type="entry name" value="AAA"/>
    <property type="match status" value="1"/>
</dbReference>
<dbReference type="CDD" id="cd06571">
    <property type="entry name" value="Bac_DnaA_C"/>
    <property type="match status" value="1"/>
</dbReference>
<dbReference type="FunFam" id="1.10.8.60:FF:000003">
    <property type="entry name" value="Chromosomal replication initiator protein DnaA"/>
    <property type="match status" value="1"/>
</dbReference>
<dbReference type="FunFam" id="3.40.50.300:FF:000668">
    <property type="entry name" value="Chromosomal replication initiator protein DnaA"/>
    <property type="match status" value="1"/>
</dbReference>
<dbReference type="Gene3D" id="1.10.1750.10">
    <property type="match status" value="1"/>
</dbReference>
<dbReference type="Gene3D" id="1.10.8.60">
    <property type="match status" value="1"/>
</dbReference>
<dbReference type="Gene3D" id="3.30.300.180">
    <property type="match status" value="1"/>
</dbReference>
<dbReference type="Gene3D" id="3.40.50.300">
    <property type="entry name" value="P-loop containing nucleotide triphosphate hydrolases"/>
    <property type="match status" value="1"/>
</dbReference>
<dbReference type="HAMAP" id="MF_00377">
    <property type="entry name" value="DnaA_bact"/>
    <property type="match status" value="1"/>
</dbReference>
<dbReference type="InterPro" id="IPR003593">
    <property type="entry name" value="AAA+_ATPase"/>
</dbReference>
<dbReference type="InterPro" id="IPR001957">
    <property type="entry name" value="Chromosome_initiator_DnaA"/>
</dbReference>
<dbReference type="InterPro" id="IPR020591">
    <property type="entry name" value="Chromosome_initiator_DnaA-like"/>
</dbReference>
<dbReference type="InterPro" id="IPR018312">
    <property type="entry name" value="Chromosome_initiator_DnaA_CS"/>
</dbReference>
<dbReference type="InterPro" id="IPR013159">
    <property type="entry name" value="DnaA_C"/>
</dbReference>
<dbReference type="InterPro" id="IPR013317">
    <property type="entry name" value="DnaA_dom"/>
</dbReference>
<dbReference type="InterPro" id="IPR024633">
    <property type="entry name" value="DnaA_N_dom"/>
</dbReference>
<dbReference type="InterPro" id="IPR038454">
    <property type="entry name" value="DnaA_N_sf"/>
</dbReference>
<dbReference type="InterPro" id="IPR027417">
    <property type="entry name" value="P-loop_NTPase"/>
</dbReference>
<dbReference type="InterPro" id="IPR010921">
    <property type="entry name" value="Trp_repressor/repl_initiator"/>
</dbReference>
<dbReference type="NCBIfam" id="TIGR00362">
    <property type="entry name" value="DnaA"/>
    <property type="match status" value="1"/>
</dbReference>
<dbReference type="PANTHER" id="PTHR30050">
    <property type="entry name" value="CHROMOSOMAL REPLICATION INITIATOR PROTEIN DNAA"/>
    <property type="match status" value="1"/>
</dbReference>
<dbReference type="PANTHER" id="PTHR30050:SF2">
    <property type="entry name" value="CHROMOSOMAL REPLICATION INITIATOR PROTEIN DNAA"/>
    <property type="match status" value="1"/>
</dbReference>
<dbReference type="Pfam" id="PF00308">
    <property type="entry name" value="Bac_DnaA"/>
    <property type="match status" value="1"/>
</dbReference>
<dbReference type="Pfam" id="PF08299">
    <property type="entry name" value="Bac_DnaA_C"/>
    <property type="match status" value="1"/>
</dbReference>
<dbReference type="Pfam" id="PF11638">
    <property type="entry name" value="DnaA_N"/>
    <property type="match status" value="1"/>
</dbReference>
<dbReference type="PRINTS" id="PR00051">
    <property type="entry name" value="DNAA"/>
</dbReference>
<dbReference type="SMART" id="SM00382">
    <property type="entry name" value="AAA"/>
    <property type="match status" value="1"/>
</dbReference>
<dbReference type="SMART" id="SM00760">
    <property type="entry name" value="Bac_DnaA_C"/>
    <property type="match status" value="1"/>
</dbReference>
<dbReference type="SUPFAM" id="SSF52540">
    <property type="entry name" value="P-loop containing nucleoside triphosphate hydrolases"/>
    <property type="match status" value="1"/>
</dbReference>
<dbReference type="SUPFAM" id="SSF48295">
    <property type="entry name" value="TrpR-like"/>
    <property type="match status" value="1"/>
</dbReference>
<dbReference type="PROSITE" id="PS01008">
    <property type="entry name" value="DNAA"/>
    <property type="match status" value="1"/>
</dbReference>
<feature type="chain" id="PRO_1000121958" description="Chromosomal replication initiator protein DnaA">
    <location>
        <begin position="1"/>
        <end position="524"/>
    </location>
</feature>
<feature type="region of interest" description="Domain I, interacts with DnaA modulators" evidence="1">
    <location>
        <begin position="1"/>
        <end position="72"/>
    </location>
</feature>
<feature type="region of interest" description="Domain II" evidence="1">
    <location>
        <begin position="72"/>
        <end position="187"/>
    </location>
</feature>
<feature type="region of interest" description="Domain III, AAA+ region" evidence="1">
    <location>
        <begin position="188"/>
        <end position="404"/>
    </location>
</feature>
<feature type="region of interest" description="Domain IV, binds dsDNA" evidence="1">
    <location>
        <begin position="405"/>
        <end position="524"/>
    </location>
</feature>
<feature type="binding site" evidence="1">
    <location>
        <position position="232"/>
    </location>
    <ligand>
        <name>ATP</name>
        <dbReference type="ChEBI" id="CHEBI:30616"/>
    </ligand>
</feature>
<feature type="binding site" evidence="1">
    <location>
        <position position="234"/>
    </location>
    <ligand>
        <name>ATP</name>
        <dbReference type="ChEBI" id="CHEBI:30616"/>
    </ligand>
</feature>
<feature type="binding site" evidence="1">
    <location>
        <position position="235"/>
    </location>
    <ligand>
        <name>ATP</name>
        <dbReference type="ChEBI" id="CHEBI:30616"/>
    </ligand>
</feature>
<feature type="binding site" evidence="1">
    <location>
        <position position="236"/>
    </location>
    <ligand>
        <name>ATP</name>
        <dbReference type="ChEBI" id="CHEBI:30616"/>
    </ligand>
</feature>
<gene>
    <name evidence="1" type="primary">dnaA</name>
    <name type="ordered locus">Bmul_0001</name>
    <name type="ordered locus">BMULJ_00070</name>
</gene>
<accession>A9AI97</accession>